<reference key="1">
    <citation type="journal article" date="2005" name="Science">
        <title>The transcriptional landscape of the mammalian genome.</title>
        <authorList>
            <person name="Carninci P."/>
            <person name="Kasukawa T."/>
            <person name="Katayama S."/>
            <person name="Gough J."/>
            <person name="Frith M.C."/>
            <person name="Maeda N."/>
            <person name="Oyama R."/>
            <person name="Ravasi T."/>
            <person name="Lenhard B."/>
            <person name="Wells C."/>
            <person name="Kodzius R."/>
            <person name="Shimokawa K."/>
            <person name="Bajic V.B."/>
            <person name="Brenner S.E."/>
            <person name="Batalov S."/>
            <person name="Forrest A.R."/>
            <person name="Zavolan M."/>
            <person name="Davis M.J."/>
            <person name="Wilming L.G."/>
            <person name="Aidinis V."/>
            <person name="Allen J.E."/>
            <person name="Ambesi-Impiombato A."/>
            <person name="Apweiler R."/>
            <person name="Aturaliya R.N."/>
            <person name="Bailey T.L."/>
            <person name="Bansal M."/>
            <person name="Baxter L."/>
            <person name="Beisel K.W."/>
            <person name="Bersano T."/>
            <person name="Bono H."/>
            <person name="Chalk A.M."/>
            <person name="Chiu K.P."/>
            <person name="Choudhary V."/>
            <person name="Christoffels A."/>
            <person name="Clutterbuck D.R."/>
            <person name="Crowe M.L."/>
            <person name="Dalla E."/>
            <person name="Dalrymple B.P."/>
            <person name="de Bono B."/>
            <person name="Della Gatta G."/>
            <person name="di Bernardo D."/>
            <person name="Down T."/>
            <person name="Engstrom P."/>
            <person name="Fagiolini M."/>
            <person name="Faulkner G."/>
            <person name="Fletcher C.F."/>
            <person name="Fukushima T."/>
            <person name="Furuno M."/>
            <person name="Futaki S."/>
            <person name="Gariboldi M."/>
            <person name="Georgii-Hemming P."/>
            <person name="Gingeras T.R."/>
            <person name="Gojobori T."/>
            <person name="Green R.E."/>
            <person name="Gustincich S."/>
            <person name="Harbers M."/>
            <person name="Hayashi Y."/>
            <person name="Hensch T.K."/>
            <person name="Hirokawa N."/>
            <person name="Hill D."/>
            <person name="Huminiecki L."/>
            <person name="Iacono M."/>
            <person name="Ikeo K."/>
            <person name="Iwama A."/>
            <person name="Ishikawa T."/>
            <person name="Jakt M."/>
            <person name="Kanapin A."/>
            <person name="Katoh M."/>
            <person name="Kawasawa Y."/>
            <person name="Kelso J."/>
            <person name="Kitamura H."/>
            <person name="Kitano H."/>
            <person name="Kollias G."/>
            <person name="Krishnan S.P."/>
            <person name="Kruger A."/>
            <person name="Kummerfeld S.K."/>
            <person name="Kurochkin I.V."/>
            <person name="Lareau L.F."/>
            <person name="Lazarevic D."/>
            <person name="Lipovich L."/>
            <person name="Liu J."/>
            <person name="Liuni S."/>
            <person name="McWilliam S."/>
            <person name="Madan Babu M."/>
            <person name="Madera M."/>
            <person name="Marchionni L."/>
            <person name="Matsuda H."/>
            <person name="Matsuzawa S."/>
            <person name="Miki H."/>
            <person name="Mignone F."/>
            <person name="Miyake S."/>
            <person name="Morris K."/>
            <person name="Mottagui-Tabar S."/>
            <person name="Mulder N."/>
            <person name="Nakano N."/>
            <person name="Nakauchi H."/>
            <person name="Ng P."/>
            <person name="Nilsson R."/>
            <person name="Nishiguchi S."/>
            <person name="Nishikawa S."/>
            <person name="Nori F."/>
            <person name="Ohara O."/>
            <person name="Okazaki Y."/>
            <person name="Orlando V."/>
            <person name="Pang K.C."/>
            <person name="Pavan W.J."/>
            <person name="Pavesi G."/>
            <person name="Pesole G."/>
            <person name="Petrovsky N."/>
            <person name="Piazza S."/>
            <person name="Reed J."/>
            <person name="Reid J.F."/>
            <person name="Ring B.Z."/>
            <person name="Ringwald M."/>
            <person name="Rost B."/>
            <person name="Ruan Y."/>
            <person name="Salzberg S.L."/>
            <person name="Sandelin A."/>
            <person name="Schneider C."/>
            <person name="Schoenbach C."/>
            <person name="Sekiguchi K."/>
            <person name="Semple C.A."/>
            <person name="Seno S."/>
            <person name="Sessa L."/>
            <person name="Sheng Y."/>
            <person name="Shibata Y."/>
            <person name="Shimada H."/>
            <person name="Shimada K."/>
            <person name="Silva D."/>
            <person name="Sinclair B."/>
            <person name="Sperling S."/>
            <person name="Stupka E."/>
            <person name="Sugiura K."/>
            <person name="Sultana R."/>
            <person name="Takenaka Y."/>
            <person name="Taki K."/>
            <person name="Tammoja K."/>
            <person name="Tan S.L."/>
            <person name="Tang S."/>
            <person name="Taylor M.S."/>
            <person name="Tegner J."/>
            <person name="Teichmann S.A."/>
            <person name="Ueda H.R."/>
            <person name="van Nimwegen E."/>
            <person name="Verardo R."/>
            <person name="Wei C.L."/>
            <person name="Yagi K."/>
            <person name="Yamanishi H."/>
            <person name="Zabarovsky E."/>
            <person name="Zhu S."/>
            <person name="Zimmer A."/>
            <person name="Hide W."/>
            <person name="Bult C."/>
            <person name="Grimmond S.M."/>
            <person name="Teasdale R.D."/>
            <person name="Liu E.T."/>
            <person name="Brusic V."/>
            <person name="Quackenbush J."/>
            <person name="Wahlestedt C."/>
            <person name="Mattick J.S."/>
            <person name="Hume D.A."/>
            <person name="Kai C."/>
            <person name="Sasaki D."/>
            <person name="Tomaru Y."/>
            <person name="Fukuda S."/>
            <person name="Kanamori-Katayama M."/>
            <person name="Suzuki M."/>
            <person name="Aoki J."/>
            <person name="Arakawa T."/>
            <person name="Iida J."/>
            <person name="Imamura K."/>
            <person name="Itoh M."/>
            <person name="Kato T."/>
            <person name="Kawaji H."/>
            <person name="Kawagashira N."/>
            <person name="Kawashima T."/>
            <person name="Kojima M."/>
            <person name="Kondo S."/>
            <person name="Konno H."/>
            <person name="Nakano K."/>
            <person name="Ninomiya N."/>
            <person name="Nishio T."/>
            <person name="Okada M."/>
            <person name="Plessy C."/>
            <person name="Shibata K."/>
            <person name="Shiraki T."/>
            <person name="Suzuki S."/>
            <person name="Tagami M."/>
            <person name="Waki K."/>
            <person name="Watahiki A."/>
            <person name="Okamura-Oho Y."/>
            <person name="Suzuki H."/>
            <person name="Kawai J."/>
            <person name="Hayashizaki Y."/>
        </authorList>
    </citation>
    <scope>NUCLEOTIDE SEQUENCE [LARGE SCALE MRNA]</scope>
    <source>
        <strain>C57BL/6J</strain>
    </source>
</reference>
<reference key="2">
    <citation type="journal article" date="2009" name="PLoS Biol.">
        <title>Lineage-specific biology revealed by a finished genome assembly of the mouse.</title>
        <authorList>
            <person name="Church D.M."/>
            <person name="Goodstadt L."/>
            <person name="Hillier L.W."/>
            <person name="Zody M.C."/>
            <person name="Goldstein S."/>
            <person name="She X."/>
            <person name="Bult C.J."/>
            <person name="Agarwala R."/>
            <person name="Cherry J.L."/>
            <person name="DiCuccio M."/>
            <person name="Hlavina W."/>
            <person name="Kapustin Y."/>
            <person name="Meric P."/>
            <person name="Maglott D."/>
            <person name="Birtle Z."/>
            <person name="Marques A.C."/>
            <person name="Graves T."/>
            <person name="Zhou S."/>
            <person name="Teague B."/>
            <person name="Potamousis K."/>
            <person name="Churas C."/>
            <person name="Place M."/>
            <person name="Herschleb J."/>
            <person name="Runnheim R."/>
            <person name="Forrest D."/>
            <person name="Amos-Landgraf J."/>
            <person name="Schwartz D.C."/>
            <person name="Cheng Z."/>
            <person name="Lindblad-Toh K."/>
            <person name="Eichler E.E."/>
            <person name="Ponting C.P."/>
        </authorList>
    </citation>
    <scope>NUCLEOTIDE SEQUENCE [LARGE SCALE GENOMIC DNA]</scope>
    <source>
        <strain>C57BL/6J</strain>
    </source>
</reference>
<reference key="3">
    <citation type="journal article" date="2004" name="Genome Res.">
        <title>The status, quality, and expansion of the NIH full-length cDNA project: the Mammalian Gene Collection (MGC).</title>
        <authorList>
            <consortium name="The MGC Project Team"/>
        </authorList>
    </citation>
    <scope>NUCLEOTIDE SEQUENCE [LARGE SCALE MRNA]</scope>
    <source>
        <tissue>Brain</tissue>
        <tissue>Testis</tissue>
    </source>
</reference>
<name>A14EL_MOUSE</name>
<protein>
    <recommendedName>
        <fullName>ARL14 effector protein-like</fullName>
    </recommendedName>
</protein>
<feature type="chain" id="PRO_0000419647" description="ARL14 effector protein-like">
    <location>
        <begin position="1"/>
        <end position="152"/>
    </location>
</feature>
<feature type="region of interest" description="Disordered" evidence="1">
    <location>
        <begin position="1"/>
        <end position="27"/>
    </location>
</feature>
<feature type="compositionally biased region" description="Polar residues" evidence="1">
    <location>
        <begin position="1"/>
        <end position="16"/>
    </location>
</feature>
<dbReference type="EMBL" id="AK145795">
    <property type="protein sequence ID" value="BAE26654.1"/>
    <property type="molecule type" value="mRNA"/>
</dbReference>
<dbReference type="EMBL" id="AC132100">
    <property type="status" value="NOT_ANNOTATED_CDS"/>
    <property type="molecule type" value="Genomic_DNA"/>
</dbReference>
<dbReference type="EMBL" id="BC147441">
    <property type="protein sequence ID" value="AAI47442.1"/>
    <property type="molecule type" value="mRNA"/>
</dbReference>
<dbReference type="EMBL" id="BC147472">
    <property type="protein sequence ID" value="AAI47473.1"/>
    <property type="molecule type" value="mRNA"/>
</dbReference>
<dbReference type="CCDS" id="CCDS29237.1"/>
<dbReference type="RefSeq" id="NP_001028618.1">
    <property type="nucleotide sequence ID" value="NM_001033446.2"/>
</dbReference>
<dbReference type="RefSeq" id="XP_006526129.1">
    <property type="nucleotide sequence ID" value="XM_006526066.2"/>
</dbReference>
<dbReference type="SMR" id="Q3UKZ7"/>
<dbReference type="BioGRID" id="237797">
    <property type="interactions" value="1"/>
</dbReference>
<dbReference type="FunCoup" id="Q3UKZ7">
    <property type="interactions" value="9"/>
</dbReference>
<dbReference type="STRING" id="10090.ENSMUSP00000157009"/>
<dbReference type="PhosphoSitePlus" id="Q3UKZ7"/>
<dbReference type="PaxDb" id="10090-ENSMUSP00000095187"/>
<dbReference type="ProteomicsDB" id="296459"/>
<dbReference type="Ensembl" id="ENSMUST00000097580.2">
    <property type="protein sequence ID" value="ENSMUSP00000095187.2"/>
    <property type="gene ID" value="ENSMUSG00000073568.3"/>
</dbReference>
<dbReference type="Ensembl" id="ENSMUST00000234910.2">
    <property type="protein sequence ID" value="ENSMUSP00000157009.2"/>
    <property type="gene ID" value="ENSMUSG00000073568.3"/>
</dbReference>
<dbReference type="GeneID" id="381142"/>
<dbReference type="KEGG" id="mmu:381142"/>
<dbReference type="UCSC" id="uc008evy.1">
    <property type="organism name" value="mouse"/>
</dbReference>
<dbReference type="AGR" id="MGI:2685795"/>
<dbReference type="CTD" id="644100"/>
<dbReference type="MGI" id="MGI:2685795">
    <property type="gene designation" value="Arl14epl"/>
</dbReference>
<dbReference type="VEuPathDB" id="HostDB:ENSMUSG00000073568"/>
<dbReference type="eggNOG" id="KOG4850">
    <property type="taxonomic scope" value="Eukaryota"/>
</dbReference>
<dbReference type="GeneTree" id="ENSGT00940000160347"/>
<dbReference type="HOGENOM" id="CLU_105549_2_0_1"/>
<dbReference type="InParanoid" id="Q3UKZ7"/>
<dbReference type="OMA" id="WVYDDIV"/>
<dbReference type="OrthoDB" id="5984406at2759"/>
<dbReference type="PhylomeDB" id="Q3UKZ7"/>
<dbReference type="TreeFam" id="TF333216"/>
<dbReference type="BioGRID-ORCS" id="381142">
    <property type="hits" value="2 hits in 77 CRISPR screens"/>
</dbReference>
<dbReference type="PRO" id="PR:Q3UKZ7"/>
<dbReference type="Proteomes" id="UP000000589">
    <property type="component" value="Chromosome 18"/>
</dbReference>
<dbReference type="RNAct" id="Q3UKZ7">
    <property type="molecule type" value="protein"/>
</dbReference>
<dbReference type="Bgee" id="ENSMUSG00000073568">
    <property type="expression patterns" value="Expressed in animal zygote and 12 other cell types or tissues"/>
</dbReference>
<dbReference type="InterPro" id="IPR029264">
    <property type="entry name" value="ARF7EP_C"/>
</dbReference>
<dbReference type="PANTHER" id="PTHR46536:SF2">
    <property type="entry name" value="ADP RIBOSYLATION FACTOR LIKE GTPASE 14 EFFECTOR PROTEIN LIKE"/>
    <property type="match status" value="1"/>
</dbReference>
<dbReference type="PANTHER" id="PTHR46536">
    <property type="entry name" value="ARL14 EFFECTOR PROTEIN"/>
    <property type="match status" value="1"/>
</dbReference>
<dbReference type="Pfam" id="PF14949">
    <property type="entry name" value="ARF7EP_C"/>
    <property type="match status" value="1"/>
</dbReference>
<gene>
    <name type="primary">Arl14epl</name>
    <name type="synonym">Gm949</name>
</gene>
<sequence length="152" mass="17541">MTEPSQKNNSTQQELTNHLFPEKSSQIGQKQLQQIERQLKCLAFQNPGPQVADFNPETRQQKKKARMSKMNEYFSVKYKVMKKYDKSGRLICNDVDLCDCLEKNCLGCFYPCPKCNSNKCGPECRCNRRWVYDAIVTESGEVINTLPFSVPD</sequence>
<proteinExistence type="evidence at transcript level"/>
<keyword id="KW-1185">Reference proteome</keyword>
<accession>Q3UKZ7</accession>
<organism>
    <name type="scientific">Mus musculus</name>
    <name type="common">Mouse</name>
    <dbReference type="NCBI Taxonomy" id="10090"/>
    <lineage>
        <taxon>Eukaryota</taxon>
        <taxon>Metazoa</taxon>
        <taxon>Chordata</taxon>
        <taxon>Craniata</taxon>
        <taxon>Vertebrata</taxon>
        <taxon>Euteleostomi</taxon>
        <taxon>Mammalia</taxon>
        <taxon>Eutheria</taxon>
        <taxon>Euarchontoglires</taxon>
        <taxon>Glires</taxon>
        <taxon>Rodentia</taxon>
        <taxon>Myomorpha</taxon>
        <taxon>Muroidea</taxon>
        <taxon>Muridae</taxon>
        <taxon>Murinae</taxon>
        <taxon>Mus</taxon>
        <taxon>Mus</taxon>
    </lineage>
</organism>
<evidence type="ECO:0000256" key="1">
    <source>
        <dbReference type="SAM" id="MobiDB-lite"/>
    </source>
</evidence>